<evidence type="ECO:0000269" key="1">
    <source>
    </source>
</evidence>
<evidence type="ECO:0000305" key="2"/>
<feature type="chain" id="PRO_0000208450" description="Teichoic acid ribitol-phosphate primase">
    <location>
        <begin position="1"/>
        <end position="389"/>
    </location>
</feature>
<feature type="sequence conflict" description="In Ref. 1; CAC86107 and 2; CAJ97394." evidence="2" ref="1 2">
    <original>MR</original>
    <variation>IG</variation>
    <location>
        <begin position="258"/>
        <end position="259"/>
    </location>
</feature>
<organism>
    <name type="scientific">Bacillus spizizenii (strain ATCC 23059 / NRRL B-14472 / W23)</name>
    <name type="common">Bacillus subtilis subsp. spizizenii</name>
    <dbReference type="NCBI Taxonomy" id="655816"/>
    <lineage>
        <taxon>Bacteria</taxon>
        <taxon>Bacillati</taxon>
        <taxon>Bacillota</taxon>
        <taxon>Bacilli</taxon>
        <taxon>Bacillales</taxon>
        <taxon>Bacillaceae</taxon>
        <taxon>Bacillus</taxon>
    </lineage>
</organism>
<proteinExistence type="evidence at protein level"/>
<comment type="function">
    <text evidence="1">Catalyzes the addition of a single ribitol phosphate unit onto the glycerol phosphate of the linkage unit, as a primer for polymerisation by TarL.</text>
</comment>
<comment type="catalytic activity">
    <reaction evidence="1">
        <text>4-O-[(2R)-glycerylphospho]-N-acetyl-beta-D-mannosaminyl-(1-&gt;4)-N-acetyl-alpha-D-glucosaminyl di-trans,octa-cis-undecaprenyl diphosphate + CDP-L-ribitol = 4-O-[1-D-ribitylphospho-(2R)-1-glycerylphospho]-N-acetyl-beta-D-mannosaminyl-(1-&gt;4)-N-acetyl-alpha-D-glucosaminyl di-trans,octa-cis-undecaprenyl diphosphate + CMP + H(+)</text>
        <dbReference type="Rhea" id="RHEA:50912"/>
        <dbReference type="ChEBI" id="CHEBI:15378"/>
        <dbReference type="ChEBI" id="CHEBI:57608"/>
        <dbReference type="ChEBI" id="CHEBI:60377"/>
        <dbReference type="ChEBI" id="CHEBI:132211"/>
        <dbReference type="ChEBI" id="CHEBI:133892"/>
        <dbReference type="EC" id="2.7.8.46"/>
    </reaction>
</comment>
<comment type="pathway">
    <text evidence="1">Cell wall biogenesis; poly(ribitol phosphate) teichoic acid biosynthesis.</text>
</comment>
<comment type="subcellular location">
    <subcellularLocation>
        <location evidence="2">Cell membrane</location>
        <topology evidence="2">Peripheral membrane protein</topology>
    </subcellularLocation>
</comment>
<comment type="similarity">
    <text evidence="2">Belongs to the CDP-glycerol glycerophosphotransferase family.</text>
</comment>
<sequence>MKTFLTRIVKGVFGTAYKLLSALLPVQHDKVVIASYREDQLSDNFRGVYEKLKQDPSLRITLLFRKMDKGLIGRAAYLLHLFCSLYHLATCRVLLLDDYYFPLYVVPKRKETVAIQLWHACGAFKKFGYSIVNKPFGPSSDYLKIVPVHSNYDYAIVSAPAAVPHFAEAFQMEEKQILPLGIPRTDYFYHKEHIRTVLDEFHQAYPELKHKKKLLYAPTFRGSGHHQEGDATPLDLLQLKSALHHKDYVVMLHLHPYMRKHAHTEEDDFVLDLTDSYSLYDLMAISDGLITDYSSVIFEYSLLKRPMYFYCPDLEDYLKERDFYYPFESFVPGPISKDVPSLVHDIESDHEADTKRIEAFSQTYITHQDGKSSERVADFISSFLTSGAD</sequence>
<accession>Q8RKJ1</accession>
<accession>B7ZDK5</accession>
<accession>E0U4X9</accession>
<dbReference type="EC" id="2.7.8.46" evidence="1"/>
<dbReference type="EMBL" id="AJ313428">
    <property type="protein sequence ID" value="CAC86107.1"/>
    <property type="molecule type" value="Genomic_DNA"/>
</dbReference>
<dbReference type="EMBL" id="AM260209">
    <property type="protein sequence ID" value="CAJ97394.1"/>
    <property type="molecule type" value="Genomic_DNA"/>
</dbReference>
<dbReference type="EMBL" id="CP002183">
    <property type="protein sequence ID" value="ADM39550.1"/>
    <property type="molecule type" value="Genomic_DNA"/>
</dbReference>
<dbReference type="SMR" id="Q8RKJ1"/>
<dbReference type="KEGG" id="bss:BSUW23_17575"/>
<dbReference type="HOGENOM" id="CLU_029598_0_0_9"/>
<dbReference type="BioCyc" id="MetaCyc:MONOMER-19964"/>
<dbReference type="BRENDA" id="2.7.8.46">
    <property type="organism ID" value="14099"/>
</dbReference>
<dbReference type="UniPathway" id="UPA00790"/>
<dbReference type="Proteomes" id="UP000002233">
    <property type="component" value="Chromosome"/>
</dbReference>
<dbReference type="GO" id="GO:0005886">
    <property type="term" value="C:plasma membrane"/>
    <property type="evidence" value="ECO:0007669"/>
    <property type="project" value="UniProtKB-SubCell"/>
</dbReference>
<dbReference type="GO" id="GO:0047355">
    <property type="term" value="F:CDP-glycerol glycerophosphotransferase activity"/>
    <property type="evidence" value="ECO:0007669"/>
    <property type="project" value="InterPro"/>
</dbReference>
<dbReference type="GO" id="GO:0071555">
    <property type="term" value="P:cell wall organization"/>
    <property type="evidence" value="ECO:0007669"/>
    <property type="project" value="UniProtKB-KW"/>
</dbReference>
<dbReference type="GO" id="GO:0019350">
    <property type="term" value="P:teichoic acid biosynthetic process"/>
    <property type="evidence" value="ECO:0007669"/>
    <property type="project" value="UniProtKB-KW"/>
</dbReference>
<dbReference type="Gene3D" id="3.40.50.11820">
    <property type="match status" value="1"/>
</dbReference>
<dbReference type="Gene3D" id="3.40.50.12580">
    <property type="match status" value="1"/>
</dbReference>
<dbReference type="InterPro" id="IPR007554">
    <property type="entry name" value="Glycerophosphate_synth"/>
</dbReference>
<dbReference type="InterPro" id="IPR043148">
    <property type="entry name" value="TagF_C"/>
</dbReference>
<dbReference type="InterPro" id="IPR043149">
    <property type="entry name" value="TagF_N"/>
</dbReference>
<dbReference type="InterPro" id="IPR051612">
    <property type="entry name" value="Teichoic_Acid_Biosynth"/>
</dbReference>
<dbReference type="PANTHER" id="PTHR37316">
    <property type="entry name" value="TEICHOIC ACID GLYCEROL-PHOSPHATE PRIMASE"/>
    <property type="match status" value="1"/>
</dbReference>
<dbReference type="PANTHER" id="PTHR37316:SF2">
    <property type="entry name" value="TEICHOIC ACID RIBITOL-PHOSPHATE POLYMERASE TARK"/>
    <property type="match status" value="1"/>
</dbReference>
<dbReference type="Pfam" id="PF04464">
    <property type="entry name" value="Glyphos_transf"/>
    <property type="match status" value="1"/>
</dbReference>
<dbReference type="SUPFAM" id="SSF53756">
    <property type="entry name" value="UDP-Glycosyltransferase/glycogen phosphorylase"/>
    <property type="match status" value="1"/>
</dbReference>
<protein>
    <recommendedName>
        <fullName evidence="2">Teichoic acid ribitol-phosphate primase</fullName>
        <ecNumber evidence="1">2.7.8.46</ecNumber>
    </recommendedName>
    <alternativeName>
        <fullName>Tar primase</fullName>
    </alternativeName>
</protein>
<keyword id="KW-1003">Cell membrane</keyword>
<keyword id="KW-0961">Cell wall biogenesis/degradation</keyword>
<keyword id="KW-0472">Membrane</keyword>
<keyword id="KW-0777">Teichoic acid biosynthesis</keyword>
<keyword id="KW-0808">Transferase</keyword>
<gene>
    <name type="primary">tarK</name>
    <name type="ordered locus">BSUW23_17575</name>
</gene>
<name>TARK_BACSH</name>
<reference key="1">
    <citation type="journal article" date="2002" name="Microbiology">
        <title>Comparison of ribitol and glycerol teichoic acid genes in Bacillus subtilis W23 and 168: identical function, similar divergent organization, but different regulation.</title>
        <authorList>
            <person name="Lazarevic V."/>
            <person name="Abellan F.-X."/>
            <person name="Beggah Moeller S."/>
            <person name="Karamata D."/>
            <person name="Maueel C."/>
        </authorList>
    </citation>
    <scope>NUCLEOTIDE SEQUENCE [GENOMIC DNA]</scope>
    <source>
        <strain>ATCC 23059 / NRRL B-14472 / W23</strain>
    </source>
</reference>
<reference key="2">
    <citation type="submission" date="2006-04" db="EMBL/GenBank/DDBJ databases">
        <title>Minor teichoic acid of Bacillus subtilis W23.</title>
        <authorList>
            <person name="Soldo B."/>
            <person name="Freymond P.P."/>
            <person name="Karamata D."/>
            <person name="Lazarevic V."/>
        </authorList>
    </citation>
    <scope>NUCLEOTIDE SEQUENCE [GENOMIC DNA]</scope>
    <source>
        <strain>ATCC 23059 / NRRL B-14472 / W23</strain>
    </source>
</reference>
<reference key="3">
    <citation type="journal article" date="2011" name="Microbiology">
        <title>The genome sequence of Bacillus subtilis subsp. spizizenii W23: insights into speciation within the B. subtilis complex and into the history of B. subtilis genetics.</title>
        <authorList>
            <person name="Zeigler D.R."/>
        </authorList>
    </citation>
    <scope>NUCLEOTIDE SEQUENCE [LARGE SCALE GENOMIC DNA]</scope>
    <source>
        <strain>ATCC 23059 / NRRL B-14472 / W23</strain>
    </source>
</reference>
<reference key="4">
    <citation type="journal article" date="2010" name="Chem. Biol.">
        <title>Staphylococcus aureus and Bacillus subtilis W23 make polyribitol wall teichoic acids using different enzymatic pathways.</title>
        <authorList>
            <person name="Brown S."/>
            <person name="Meredith T."/>
            <person name="Swoboda J."/>
            <person name="Walker S."/>
        </authorList>
    </citation>
    <scope>FUNCTION</scope>
    <scope>CATALYTIC ACTIVITY</scope>
    <scope>PATHWAY</scope>
    <source>
        <strain>ATCC 23059 / NRRL B-14472 / W23</strain>
    </source>
</reference>